<sequence>MSAQIVPAPEHVCYVHCNFCNTIFAVSVPSNSMLNIVTVRCGHCTSLLSVNLRGLVQALPAEDHLQDNLKMHNMSFRENYSEYGSSSRYGRVPMMFSKNDTEHMLHVRPPEKRQRVPSAYNRFIKEEIRRIKANNPDISHREAFSTAAKNWAHFPNIHFGLGSHESSKKLDEAIGAPSPQKVQRLY</sequence>
<name>YAB2_ORYSJ</name>
<accession>Q10FZ7</accession>
<accession>Q53KW5</accession>
<accession>Q9ZSP0</accession>
<evidence type="ECO:0000250" key="1"/>
<evidence type="ECO:0000269" key="2">
    <source>
    </source>
</evidence>
<evidence type="ECO:0000305" key="3"/>
<feature type="chain" id="PRO_0000308694" description="Protein YABBY 2">
    <location>
        <begin position="1"/>
        <end position="186"/>
    </location>
</feature>
<feature type="zinc finger region" description="C4-type">
    <location>
        <begin position="17"/>
        <end position="44"/>
    </location>
</feature>
<protein>
    <recommendedName>
        <fullName>Protein YABBY 2</fullName>
    </recommendedName>
    <alternativeName>
        <fullName>OsYABBY2</fullName>
        <shortName>OsYAB2</shortName>
    </alternativeName>
    <alternativeName>
        <fullName>Protein FILAMENTOUS FLOWER 2</fullName>
    </alternativeName>
</protein>
<proteinExistence type="evidence at transcript level"/>
<dbReference type="EMBL" id="AF098753">
    <property type="protein sequence ID" value="AAC72848.1"/>
    <property type="molecule type" value="mRNA"/>
</dbReference>
<dbReference type="EMBL" id="AB274014">
    <property type="protein sequence ID" value="BAF45803.1"/>
    <property type="molecule type" value="mRNA"/>
</dbReference>
<dbReference type="EMBL" id="AC145381">
    <property type="protein sequence ID" value="AAX95527.1"/>
    <property type="status" value="ALT_SEQ"/>
    <property type="molecule type" value="Genomic_DNA"/>
</dbReference>
<dbReference type="EMBL" id="DP000009">
    <property type="protein sequence ID" value="ABF97910.1"/>
    <property type="molecule type" value="Genomic_DNA"/>
</dbReference>
<dbReference type="EMBL" id="AP008209">
    <property type="protein sequence ID" value="BAF12697.1"/>
    <property type="molecule type" value="Genomic_DNA"/>
</dbReference>
<dbReference type="EMBL" id="AP014959">
    <property type="protein sequence ID" value="BAS85507.1"/>
    <property type="molecule type" value="Genomic_DNA"/>
</dbReference>
<dbReference type="PIR" id="T51588">
    <property type="entry name" value="T51588"/>
</dbReference>
<dbReference type="RefSeq" id="XP_015628574.1">
    <property type="nucleotide sequence ID" value="XM_015773088.1"/>
</dbReference>
<dbReference type="RefSeq" id="XP_015628575.1">
    <property type="nucleotide sequence ID" value="XM_015773089.1"/>
</dbReference>
<dbReference type="RefSeq" id="XP_015628576.1">
    <property type="nucleotide sequence ID" value="XM_015773090.1"/>
</dbReference>
<dbReference type="SMR" id="Q10FZ7"/>
<dbReference type="FunCoup" id="Q10FZ7">
    <property type="interactions" value="678"/>
</dbReference>
<dbReference type="STRING" id="39947.Q10FZ7"/>
<dbReference type="PaxDb" id="39947-Q10FZ7"/>
<dbReference type="EnsemblPlants" id="Os03t0650000-01">
    <property type="protein sequence ID" value="Os03t0650000-01"/>
    <property type="gene ID" value="Os03g0650000"/>
</dbReference>
<dbReference type="EnsemblPlants" id="Os03t0650000-02">
    <property type="protein sequence ID" value="Os03t0650000-02"/>
    <property type="gene ID" value="Os03g0650000"/>
</dbReference>
<dbReference type="Gramene" id="Os03t0650000-01">
    <property type="protein sequence ID" value="Os03t0650000-01"/>
    <property type="gene ID" value="Os03g0650000"/>
</dbReference>
<dbReference type="Gramene" id="Os03t0650000-02">
    <property type="protein sequence ID" value="Os03t0650000-02"/>
    <property type="gene ID" value="Os03g0650000"/>
</dbReference>
<dbReference type="KEGG" id="dosa:Os03g0650000"/>
<dbReference type="eggNOG" id="ENOG502R9GD">
    <property type="taxonomic scope" value="Eukaryota"/>
</dbReference>
<dbReference type="HOGENOM" id="CLU_071156_0_1_1"/>
<dbReference type="InParanoid" id="Q10FZ7"/>
<dbReference type="OMA" id="PGPQKVQ"/>
<dbReference type="OrthoDB" id="667577at2759"/>
<dbReference type="Proteomes" id="UP000000763">
    <property type="component" value="Chromosome 3"/>
</dbReference>
<dbReference type="Proteomes" id="UP000059680">
    <property type="component" value="Chromosome 3"/>
</dbReference>
<dbReference type="ExpressionAtlas" id="Q10FZ7">
    <property type="expression patterns" value="baseline and differential"/>
</dbReference>
<dbReference type="GO" id="GO:0005634">
    <property type="term" value="C:nucleus"/>
    <property type="evidence" value="ECO:0000318"/>
    <property type="project" value="GO_Central"/>
</dbReference>
<dbReference type="GO" id="GO:0008270">
    <property type="term" value="F:zinc ion binding"/>
    <property type="evidence" value="ECO:0007669"/>
    <property type="project" value="UniProtKB-KW"/>
</dbReference>
<dbReference type="GO" id="GO:0010158">
    <property type="term" value="P:abaxial cell fate specification"/>
    <property type="evidence" value="ECO:0000318"/>
    <property type="project" value="GO_Central"/>
</dbReference>
<dbReference type="GO" id="GO:0045165">
    <property type="term" value="P:cell fate commitment"/>
    <property type="evidence" value="ECO:0000318"/>
    <property type="project" value="GO_Central"/>
</dbReference>
<dbReference type="CDD" id="cd00084">
    <property type="entry name" value="HMG-box_SF"/>
    <property type="match status" value="1"/>
</dbReference>
<dbReference type="FunFam" id="1.10.30.10:FF:000012">
    <property type="entry name" value="axial regulator YABBY 5-like"/>
    <property type="match status" value="1"/>
</dbReference>
<dbReference type="Gene3D" id="1.10.30.10">
    <property type="entry name" value="High mobility group box domain"/>
    <property type="match status" value="1"/>
</dbReference>
<dbReference type="InterPro" id="IPR036910">
    <property type="entry name" value="HMG_box_dom_sf"/>
</dbReference>
<dbReference type="InterPro" id="IPR006780">
    <property type="entry name" value="YABBY"/>
</dbReference>
<dbReference type="InterPro" id="IPR056775">
    <property type="entry name" value="YABBY_C"/>
</dbReference>
<dbReference type="InterPro" id="IPR056776">
    <property type="entry name" value="YABBY_N"/>
</dbReference>
<dbReference type="PANTHER" id="PTHR31675:SF38">
    <property type="entry name" value="PROTEIN YABBY 2"/>
    <property type="match status" value="1"/>
</dbReference>
<dbReference type="PANTHER" id="PTHR31675">
    <property type="entry name" value="PROTEIN YABBY 6-RELATED"/>
    <property type="match status" value="1"/>
</dbReference>
<dbReference type="Pfam" id="PF04690">
    <property type="entry name" value="YABBY"/>
    <property type="match status" value="1"/>
</dbReference>
<dbReference type="Pfam" id="PF24868">
    <property type="entry name" value="YABBY_N"/>
    <property type="match status" value="1"/>
</dbReference>
<dbReference type="SUPFAM" id="SSF47095">
    <property type="entry name" value="HMG-box"/>
    <property type="match status" value="1"/>
</dbReference>
<organism>
    <name type="scientific">Oryza sativa subsp. japonica</name>
    <name type="common">Rice</name>
    <dbReference type="NCBI Taxonomy" id="39947"/>
    <lineage>
        <taxon>Eukaryota</taxon>
        <taxon>Viridiplantae</taxon>
        <taxon>Streptophyta</taxon>
        <taxon>Embryophyta</taxon>
        <taxon>Tracheophyta</taxon>
        <taxon>Spermatophyta</taxon>
        <taxon>Magnoliopsida</taxon>
        <taxon>Liliopsida</taxon>
        <taxon>Poales</taxon>
        <taxon>Poaceae</taxon>
        <taxon>BOP clade</taxon>
        <taxon>Oryzoideae</taxon>
        <taxon>Oryzeae</taxon>
        <taxon>Oryzinae</taxon>
        <taxon>Oryza</taxon>
        <taxon>Oryza sativa</taxon>
    </lineage>
</organism>
<gene>
    <name type="primary">YAB2</name>
    <name type="synonym">FIL2</name>
    <name type="ordered locus">Os03g0650000</name>
    <name type="ordered locus">LOC_Os03g44710</name>
</gene>
<reference key="1">
    <citation type="journal article" date="1999" name="Genes Dev.">
        <title>FILAMENTOUS FLOWER, a meristem and organ identity gene of Arabidopsis, encodes a protein with a zinc finger and HMG-related domains.</title>
        <authorList>
            <person name="Sawa S."/>
            <person name="Watanabe K."/>
            <person name="Goto K."/>
            <person name="Kanaya E."/>
            <person name="Morita E.H."/>
            <person name="Okada K."/>
        </authorList>
    </citation>
    <scope>NUCLEOTIDE SEQUENCE [MRNA]</scope>
</reference>
<reference key="2">
    <citation type="journal article" date="2007" name="Mol. Genet. Genomics">
        <title>Molecular characterization the YABBY gene family in Oryza sativa and expression analysis of OsYABBY1.</title>
        <authorList>
            <person name="Toriba T."/>
            <person name="Harada K."/>
            <person name="Takamura A."/>
            <person name="Nakamura H."/>
            <person name="Ichikawa H."/>
            <person name="Suzaki T."/>
            <person name="Hirano H.-Y."/>
        </authorList>
    </citation>
    <scope>NUCLEOTIDE SEQUENCE [MRNA]</scope>
    <scope>TISSUE SPECIFICITY</scope>
    <scope>GENE FAMILY</scope>
    <scope>NOMENCLATURE</scope>
    <source>
        <strain>cv. Nipponbare</strain>
    </source>
</reference>
<reference key="3">
    <citation type="journal article" date="2005" name="Genome Res.">
        <title>Sequence, annotation, and analysis of synteny between rice chromosome 3 and diverged grass species.</title>
        <authorList>
            <consortium name="The rice chromosome 3 sequencing consortium"/>
            <person name="Buell C.R."/>
            <person name="Yuan Q."/>
            <person name="Ouyang S."/>
            <person name="Liu J."/>
            <person name="Zhu W."/>
            <person name="Wang A."/>
            <person name="Maiti R."/>
            <person name="Haas B."/>
            <person name="Wortman J."/>
            <person name="Pertea M."/>
            <person name="Jones K.M."/>
            <person name="Kim M."/>
            <person name="Overton L."/>
            <person name="Tsitrin T."/>
            <person name="Fadrosh D."/>
            <person name="Bera J."/>
            <person name="Weaver B."/>
            <person name="Jin S."/>
            <person name="Johri S."/>
            <person name="Reardon M."/>
            <person name="Webb K."/>
            <person name="Hill J."/>
            <person name="Moffat K."/>
            <person name="Tallon L."/>
            <person name="Van Aken S."/>
            <person name="Lewis M."/>
            <person name="Utterback T."/>
            <person name="Feldblyum T."/>
            <person name="Zismann V."/>
            <person name="Iobst S."/>
            <person name="Hsiao J."/>
            <person name="de Vazeille A.R."/>
            <person name="Salzberg S.L."/>
            <person name="White O."/>
            <person name="Fraser C.M."/>
            <person name="Yu Y."/>
            <person name="Kim H."/>
            <person name="Rambo T."/>
            <person name="Currie J."/>
            <person name="Collura K."/>
            <person name="Kernodle-Thompson S."/>
            <person name="Wei F."/>
            <person name="Kudrna K."/>
            <person name="Ammiraju J.S.S."/>
            <person name="Luo M."/>
            <person name="Goicoechea J.L."/>
            <person name="Wing R.A."/>
            <person name="Henry D."/>
            <person name="Oates R."/>
            <person name="Palmer M."/>
            <person name="Pries G."/>
            <person name="Saski C."/>
            <person name="Simmons J."/>
            <person name="Soderlund C."/>
            <person name="Nelson W."/>
            <person name="de la Bastide M."/>
            <person name="Spiegel L."/>
            <person name="Nascimento L."/>
            <person name="Huang E."/>
            <person name="Preston R."/>
            <person name="Zutavern T."/>
            <person name="Palmer L."/>
            <person name="O'Shaughnessy A."/>
            <person name="Dike S."/>
            <person name="McCombie W.R."/>
            <person name="Minx P."/>
            <person name="Cordum H."/>
            <person name="Wilson R."/>
            <person name="Jin W."/>
            <person name="Lee H.R."/>
            <person name="Jiang J."/>
            <person name="Jackson S."/>
        </authorList>
    </citation>
    <scope>NUCLEOTIDE SEQUENCE [LARGE SCALE GENOMIC DNA]</scope>
    <source>
        <strain>cv. Nipponbare</strain>
    </source>
</reference>
<reference key="4">
    <citation type="journal article" date="2005" name="Nature">
        <title>The map-based sequence of the rice genome.</title>
        <authorList>
            <consortium name="International rice genome sequencing project (IRGSP)"/>
        </authorList>
    </citation>
    <scope>NUCLEOTIDE SEQUENCE [LARGE SCALE GENOMIC DNA]</scope>
    <source>
        <strain>cv. Nipponbare</strain>
    </source>
</reference>
<reference key="5">
    <citation type="journal article" date="2008" name="Nucleic Acids Res.">
        <title>The rice annotation project database (RAP-DB): 2008 update.</title>
        <authorList>
            <consortium name="The rice annotation project (RAP)"/>
        </authorList>
    </citation>
    <scope>GENOME REANNOTATION</scope>
    <source>
        <strain>cv. Nipponbare</strain>
    </source>
</reference>
<reference key="6">
    <citation type="journal article" date="2013" name="Rice">
        <title>Improvement of the Oryza sativa Nipponbare reference genome using next generation sequence and optical map data.</title>
        <authorList>
            <person name="Kawahara Y."/>
            <person name="de la Bastide M."/>
            <person name="Hamilton J.P."/>
            <person name="Kanamori H."/>
            <person name="McCombie W.R."/>
            <person name="Ouyang S."/>
            <person name="Schwartz D.C."/>
            <person name="Tanaka T."/>
            <person name="Wu J."/>
            <person name="Zhou S."/>
            <person name="Childs K.L."/>
            <person name="Davidson R.M."/>
            <person name="Lin H."/>
            <person name="Quesada-Ocampo L."/>
            <person name="Vaillancourt B."/>
            <person name="Sakai H."/>
            <person name="Lee S.S."/>
            <person name="Kim J."/>
            <person name="Numa H."/>
            <person name="Itoh T."/>
            <person name="Buell C.R."/>
            <person name="Matsumoto T."/>
        </authorList>
    </citation>
    <scope>GENOME REANNOTATION</scope>
    <source>
        <strain>cv. Nipponbare</strain>
    </source>
</reference>
<keyword id="KW-0479">Metal-binding</keyword>
<keyword id="KW-0539">Nucleus</keyword>
<keyword id="KW-1185">Reference proteome</keyword>
<keyword id="KW-0862">Zinc</keyword>
<keyword id="KW-0863">Zinc-finger</keyword>
<comment type="subcellular location">
    <subcellularLocation>
        <location evidence="1">Nucleus</location>
    </subcellularLocation>
</comment>
<comment type="tissue specificity">
    <text evidence="2">Expressed in leaf blades, leaf sheaths and flowers.</text>
</comment>
<comment type="similarity">
    <text evidence="3">Belongs to the YABBY family.</text>
</comment>
<comment type="sequence caution" evidence="3">
    <conflict type="erroneous gene model prediction">
        <sequence resource="EMBL-CDS" id="AAX95527"/>
    </conflict>
</comment>